<accession>Q17XN2</accession>
<feature type="chain" id="PRO_1000007252" description="Large ribosomal subunit protein bL28">
    <location>
        <begin position="1"/>
        <end position="62"/>
    </location>
</feature>
<proteinExistence type="inferred from homology"/>
<comment type="similarity">
    <text evidence="1">Belongs to the bacterial ribosomal protein bL28 family.</text>
</comment>
<gene>
    <name evidence="1" type="primary">rpmB</name>
    <name type="ordered locus">Hac_0809</name>
</gene>
<name>RL28_HELAH</name>
<organism>
    <name type="scientific">Helicobacter acinonychis (strain Sheeba)</name>
    <dbReference type="NCBI Taxonomy" id="382638"/>
    <lineage>
        <taxon>Bacteria</taxon>
        <taxon>Pseudomonadati</taxon>
        <taxon>Campylobacterota</taxon>
        <taxon>Epsilonproteobacteria</taxon>
        <taxon>Campylobacterales</taxon>
        <taxon>Helicobacteraceae</taxon>
        <taxon>Helicobacter</taxon>
    </lineage>
</organism>
<keyword id="KW-0687">Ribonucleoprotein</keyword>
<keyword id="KW-0689">Ribosomal protein</keyword>
<sequence>MARRCTLTFKGSMIGNHVSHANNKNKRRLLPNLRSIKIQLDDGTTRRIKVAASTLRTMRKGA</sequence>
<dbReference type="EMBL" id="AM260522">
    <property type="protein sequence ID" value="CAJ99594.1"/>
    <property type="molecule type" value="Genomic_DNA"/>
</dbReference>
<dbReference type="RefSeq" id="WP_011577707.1">
    <property type="nucleotide sequence ID" value="NC_008229.1"/>
</dbReference>
<dbReference type="SMR" id="Q17XN2"/>
<dbReference type="STRING" id="382638.Hac_0809"/>
<dbReference type="GeneID" id="31758229"/>
<dbReference type="KEGG" id="hac:Hac_0809"/>
<dbReference type="eggNOG" id="COG0227">
    <property type="taxonomic scope" value="Bacteria"/>
</dbReference>
<dbReference type="HOGENOM" id="CLU_064548_7_2_7"/>
<dbReference type="BioCyc" id="HACI382638:HAC_RS03485-MONOMER"/>
<dbReference type="Proteomes" id="UP000000775">
    <property type="component" value="Chromosome"/>
</dbReference>
<dbReference type="GO" id="GO:1990904">
    <property type="term" value="C:ribonucleoprotein complex"/>
    <property type="evidence" value="ECO:0007669"/>
    <property type="project" value="UniProtKB-KW"/>
</dbReference>
<dbReference type="GO" id="GO:0005840">
    <property type="term" value="C:ribosome"/>
    <property type="evidence" value="ECO:0007669"/>
    <property type="project" value="UniProtKB-KW"/>
</dbReference>
<dbReference type="GO" id="GO:0003735">
    <property type="term" value="F:structural constituent of ribosome"/>
    <property type="evidence" value="ECO:0007669"/>
    <property type="project" value="InterPro"/>
</dbReference>
<dbReference type="GO" id="GO:0006412">
    <property type="term" value="P:translation"/>
    <property type="evidence" value="ECO:0007669"/>
    <property type="project" value="UniProtKB-UniRule"/>
</dbReference>
<dbReference type="Gene3D" id="2.30.170.40">
    <property type="entry name" value="Ribosomal protein L28/L24"/>
    <property type="match status" value="1"/>
</dbReference>
<dbReference type="HAMAP" id="MF_00373">
    <property type="entry name" value="Ribosomal_bL28"/>
    <property type="match status" value="1"/>
</dbReference>
<dbReference type="InterPro" id="IPR050096">
    <property type="entry name" value="Bacterial_rp_bL28"/>
</dbReference>
<dbReference type="InterPro" id="IPR026569">
    <property type="entry name" value="Ribosomal_bL28"/>
</dbReference>
<dbReference type="InterPro" id="IPR034704">
    <property type="entry name" value="Ribosomal_bL28/bL31-like_sf"/>
</dbReference>
<dbReference type="InterPro" id="IPR001383">
    <property type="entry name" value="Ribosomal_bL28_bact-type"/>
</dbReference>
<dbReference type="InterPro" id="IPR037147">
    <property type="entry name" value="Ribosomal_bL28_sf"/>
</dbReference>
<dbReference type="NCBIfam" id="TIGR00009">
    <property type="entry name" value="L28"/>
    <property type="match status" value="1"/>
</dbReference>
<dbReference type="PANTHER" id="PTHR39080">
    <property type="entry name" value="50S RIBOSOMAL PROTEIN L28"/>
    <property type="match status" value="1"/>
</dbReference>
<dbReference type="PANTHER" id="PTHR39080:SF1">
    <property type="entry name" value="LARGE RIBOSOMAL SUBUNIT PROTEIN BL28A"/>
    <property type="match status" value="1"/>
</dbReference>
<dbReference type="Pfam" id="PF00830">
    <property type="entry name" value="Ribosomal_L28"/>
    <property type="match status" value="1"/>
</dbReference>
<dbReference type="SUPFAM" id="SSF143800">
    <property type="entry name" value="L28p-like"/>
    <property type="match status" value="1"/>
</dbReference>
<protein>
    <recommendedName>
        <fullName evidence="1">Large ribosomal subunit protein bL28</fullName>
    </recommendedName>
    <alternativeName>
        <fullName evidence="2">50S ribosomal protein L28</fullName>
    </alternativeName>
</protein>
<evidence type="ECO:0000255" key="1">
    <source>
        <dbReference type="HAMAP-Rule" id="MF_00373"/>
    </source>
</evidence>
<evidence type="ECO:0000305" key="2"/>
<reference key="1">
    <citation type="journal article" date="2006" name="PLoS Genet.">
        <title>Who ate whom? Adaptive Helicobacter genomic changes that accompanied a host jump from early humans to large felines.</title>
        <authorList>
            <person name="Eppinger M."/>
            <person name="Baar C."/>
            <person name="Linz B."/>
            <person name="Raddatz G."/>
            <person name="Lanz C."/>
            <person name="Keller H."/>
            <person name="Morelli G."/>
            <person name="Gressmann H."/>
            <person name="Achtman M."/>
            <person name="Schuster S.C."/>
        </authorList>
    </citation>
    <scope>NUCLEOTIDE SEQUENCE [LARGE SCALE GENOMIC DNA]</scope>
    <source>
        <strain>Sheeba</strain>
    </source>
</reference>